<accession>P0CS19</accession>
<accession>Q55V58</accession>
<accession>Q5KL24</accession>
<comment type="function">
    <text evidence="1">Plays a role in the regulation of membrane potential. Could mediate a proton leak (By similarity).</text>
</comment>
<comment type="subcellular location">
    <subcellularLocation>
        <location evidence="3">Cell membrane</location>
        <topology evidence="3">Multi-pass membrane protein</topology>
    </subcellularLocation>
</comment>
<comment type="similarity">
    <text evidence="3">Belongs to the UPF0057 (PMP3) family.</text>
</comment>
<comment type="sequence caution" evidence="3">
    <conflict type="erroneous gene model prediction">
        <sequence resource="EMBL-CDS" id="EAL21587"/>
    </conflict>
</comment>
<organism>
    <name type="scientific">Cryptococcus neoformans var. neoformans serotype D (strain B-3501A)</name>
    <name type="common">Filobasidiella neoformans</name>
    <dbReference type="NCBI Taxonomy" id="283643"/>
    <lineage>
        <taxon>Eukaryota</taxon>
        <taxon>Fungi</taxon>
        <taxon>Dikarya</taxon>
        <taxon>Basidiomycota</taxon>
        <taxon>Agaricomycotina</taxon>
        <taxon>Tremellomycetes</taxon>
        <taxon>Tremellales</taxon>
        <taxon>Cryptococcaceae</taxon>
        <taxon>Cryptococcus</taxon>
        <taxon>Cryptococcus neoformans species complex</taxon>
    </lineage>
</organism>
<feature type="chain" id="PRO_0000410322" description="Plasma membrane proteolipid 3">
    <location>
        <begin position="1"/>
        <end position="57"/>
    </location>
</feature>
<feature type="transmembrane region" description="Helical" evidence="2">
    <location>
        <begin position="3"/>
        <end position="23"/>
    </location>
</feature>
<feature type="transmembrane region" description="Helical" evidence="2">
    <location>
        <begin position="34"/>
        <end position="54"/>
    </location>
</feature>
<protein>
    <recommendedName>
        <fullName>Plasma membrane proteolipid 3</fullName>
    </recommendedName>
</protein>
<evidence type="ECO:0000250" key="1"/>
<evidence type="ECO:0000255" key="2"/>
<evidence type="ECO:0000305" key="3"/>
<sequence>MAFTCSDIFKIILAIILPPLGVFLERGCGADLLINILLTILGYIPGIIHALYIILKY</sequence>
<keyword id="KW-1003">Cell membrane</keyword>
<keyword id="KW-0472">Membrane</keyword>
<keyword id="KW-0812">Transmembrane</keyword>
<keyword id="KW-1133">Transmembrane helix</keyword>
<reference key="1">
    <citation type="journal article" date="2005" name="Science">
        <title>The genome of the basidiomycetous yeast and human pathogen Cryptococcus neoformans.</title>
        <authorList>
            <person name="Loftus B.J."/>
            <person name="Fung E."/>
            <person name="Roncaglia P."/>
            <person name="Rowley D."/>
            <person name="Amedeo P."/>
            <person name="Bruno D."/>
            <person name="Vamathevan J."/>
            <person name="Miranda M."/>
            <person name="Anderson I.J."/>
            <person name="Fraser J.A."/>
            <person name="Allen J.E."/>
            <person name="Bosdet I.E."/>
            <person name="Brent M.R."/>
            <person name="Chiu R."/>
            <person name="Doering T.L."/>
            <person name="Donlin M.J."/>
            <person name="D'Souza C.A."/>
            <person name="Fox D.S."/>
            <person name="Grinberg V."/>
            <person name="Fu J."/>
            <person name="Fukushima M."/>
            <person name="Haas B.J."/>
            <person name="Huang J.C."/>
            <person name="Janbon G."/>
            <person name="Jones S.J.M."/>
            <person name="Koo H.L."/>
            <person name="Krzywinski M.I."/>
            <person name="Kwon-Chung K.J."/>
            <person name="Lengeler K.B."/>
            <person name="Maiti R."/>
            <person name="Marra M.A."/>
            <person name="Marra R.E."/>
            <person name="Mathewson C.A."/>
            <person name="Mitchell T.G."/>
            <person name="Pertea M."/>
            <person name="Riggs F.R."/>
            <person name="Salzberg S.L."/>
            <person name="Schein J.E."/>
            <person name="Shvartsbeyn A."/>
            <person name="Shin H."/>
            <person name="Shumway M."/>
            <person name="Specht C.A."/>
            <person name="Suh B.B."/>
            <person name="Tenney A."/>
            <person name="Utterback T.R."/>
            <person name="Wickes B.L."/>
            <person name="Wortman J.R."/>
            <person name="Wye N.H."/>
            <person name="Kronstad J.W."/>
            <person name="Lodge J.K."/>
            <person name="Heitman J."/>
            <person name="Davis R.W."/>
            <person name="Fraser C.M."/>
            <person name="Hyman R.W."/>
        </authorList>
    </citation>
    <scope>NUCLEOTIDE SEQUENCE [LARGE SCALE GENOMIC DNA]</scope>
    <source>
        <strain>B-3501A</strain>
    </source>
</reference>
<name>PMP3_CRYNB</name>
<proteinExistence type="inferred from homology"/>
<gene>
    <name type="primary">PMP3</name>
    <name type="ordered locus">CNBC6250</name>
</gene>
<dbReference type="EMBL" id="AAEY01000017">
    <property type="protein sequence ID" value="EAL21587.1"/>
    <property type="status" value="ALT_SEQ"/>
    <property type="molecule type" value="Genomic_DNA"/>
</dbReference>
<dbReference type="RefSeq" id="XP_776234.1">
    <property type="nucleotide sequence ID" value="XM_771141.1"/>
</dbReference>
<dbReference type="SMR" id="P0CS19"/>
<dbReference type="EnsemblFungi" id="AAW42114">
    <property type="protein sequence ID" value="AAW42114"/>
    <property type="gene ID" value="CNC01010"/>
</dbReference>
<dbReference type="GeneID" id="4935292"/>
<dbReference type="KEGG" id="cnb:CNBC6250"/>
<dbReference type="HOGENOM" id="CLU_107649_6_2_1"/>
<dbReference type="OrthoDB" id="1760at5206"/>
<dbReference type="GO" id="GO:0005886">
    <property type="term" value="C:plasma membrane"/>
    <property type="evidence" value="ECO:0007669"/>
    <property type="project" value="UniProtKB-SubCell"/>
</dbReference>
<dbReference type="InterPro" id="IPR000612">
    <property type="entry name" value="PMP3"/>
</dbReference>
<dbReference type="PANTHER" id="PTHR21659">
    <property type="entry name" value="HYDROPHOBIC PROTEIN RCI2 LOW TEMPERATURE AND SALT RESPONSIVE PROTEIN LTI6 -RELATED"/>
    <property type="match status" value="1"/>
</dbReference>
<dbReference type="PANTHER" id="PTHR21659:SF42">
    <property type="entry name" value="UPF0057 MEMBRANE PROTEIN ZK632.10-RELATED"/>
    <property type="match status" value="1"/>
</dbReference>
<dbReference type="Pfam" id="PF01679">
    <property type="entry name" value="Pmp3"/>
    <property type="match status" value="1"/>
</dbReference>
<dbReference type="PROSITE" id="PS01309">
    <property type="entry name" value="UPF0057"/>
    <property type="match status" value="1"/>
</dbReference>